<accession>Q7T0V2</accession>
<sequence>MAEELRRFLYKKLTSVEGLHAIVVSDRDGVPVIKVANENAPEQALRPAFLSTFALATDQGSKLGLSKNKSIICYYSTYQVVQFNQLPLVVSFIASSNANTGLILSLEKELGSLFKELRQAVIS</sequence>
<protein>
    <recommendedName>
        <fullName>Ragulator complex protein LAMTOR3-A</fullName>
    </recommendedName>
    <alternativeName>
        <fullName>Late endosomal/lysosomal adaptor and MAPK and MTOR activator 3-A</fullName>
    </alternativeName>
    <alternativeName>
        <fullName>Mitogen-activated protein kinase scaffold protein 1</fullName>
    </alternativeName>
</protein>
<name>LTR3A_XENLA</name>
<comment type="function">
    <text evidence="2">As part of the Ragulator complex it is involved in amino acid sensing and activation of mTORC1, a signaling complex promoting cell growth in response to growth factors, energy levels, and amino acids. Activated by amino acids through a mechanism involving the lysosomal V-ATPase, the Ragulator plays a dual role for the small GTPases Rag (RagA/RRAGA, RagB/RRAGB, RagC/RRAGC and/or RagD/RRAGD): it (1) acts as a guanine nucleotide exchange factor (GEF), activating the small GTPases Rag and (2) mediates recruitment of Rag GTPases to the lysosome membrane. Activated Ragulator and Rag GTPases function as a scaffold recruiting mTORC1 to lysosomes where it is in turn activated.</text>
</comment>
<comment type="subunit">
    <text evidence="1 2">Part of the Ragulator complex composed of lamtor1, lamtor2, lamtor3, lamtor4 and lamtor5. The Ragulator complex interacts with slc38a9; the probable amino acid sensor. Component of the lysosomal folliculin complex (LFC).</text>
</comment>
<comment type="subcellular location">
    <subcellularLocation>
        <location evidence="1">Late endosome membrane</location>
        <topology evidence="1">Peripheral membrane protein</topology>
        <orientation evidence="1">Cytoplasmic side</orientation>
    </subcellularLocation>
    <text evidence="1">Recruited to lysosome and endosome membranes by LAMTOR1.</text>
</comment>
<comment type="similarity">
    <text evidence="3">Belongs to the LAMTOR3 family.</text>
</comment>
<gene>
    <name type="primary">lamtor3-a</name>
    <name type="synonym">mapksp1</name>
</gene>
<proteinExistence type="evidence at transcript level"/>
<organism>
    <name type="scientific">Xenopus laevis</name>
    <name type="common">African clawed frog</name>
    <dbReference type="NCBI Taxonomy" id="8355"/>
    <lineage>
        <taxon>Eukaryota</taxon>
        <taxon>Metazoa</taxon>
        <taxon>Chordata</taxon>
        <taxon>Craniata</taxon>
        <taxon>Vertebrata</taxon>
        <taxon>Euteleostomi</taxon>
        <taxon>Amphibia</taxon>
        <taxon>Batrachia</taxon>
        <taxon>Anura</taxon>
        <taxon>Pipoidea</taxon>
        <taxon>Pipidae</taxon>
        <taxon>Xenopodinae</taxon>
        <taxon>Xenopus</taxon>
        <taxon>Xenopus</taxon>
    </lineage>
</organism>
<reference key="1">
    <citation type="submission" date="2003-08" db="EMBL/GenBank/DDBJ databases">
        <authorList>
            <consortium name="NIH - Xenopus Gene Collection (XGC) project"/>
        </authorList>
    </citation>
    <scope>NUCLEOTIDE SEQUENCE [LARGE SCALE MRNA]</scope>
    <source>
        <tissue>Embryo</tissue>
    </source>
</reference>
<feature type="chain" id="PRO_0000356165" description="Ragulator complex protein LAMTOR3-A">
    <location>
        <begin position="1"/>
        <end position="123"/>
    </location>
</feature>
<dbReference type="EMBL" id="BC056026">
    <property type="protein sequence ID" value="AAH56026.1"/>
    <property type="molecule type" value="mRNA"/>
</dbReference>
<dbReference type="RefSeq" id="NP_001080876.1">
    <property type="nucleotide sequence ID" value="NM_001087407.1"/>
</dbReference>
<dbReference type="RefSeq" id="XP_018117172.1">
    <property type="nucleotide sequence ID" value="XM_018261683.1"/>
</dbReference>
<dbReference type="SMR" id="Q7T0V2"/>
<dbReference type="DNASU" id="380570"/>
<dbReference type="GeneID" id="380570"/>
<dbReference type="KEGG" id="xla:380570"/>
<dbReference type="AGR" id="Xenbase:XB-GENE-6253417"/>
<dbReference type="CTD" id="380570"/>
<dbReference type="Xenbase" id="XB-GENE-6253417">
    <property type="gene designation" value="lamtor3l.L"/>
</dbReference>
<dbReference type="OrthoDB" id="343907at2759"/>
<dbReference type="Proteomes" id="UP000186698">
    <property type="component" value="Chromosome 5L"/>
</dbReference>
<dbReference type="Bgee" id="380570">
    <property type="expression patterns" value="Expressed in brain and 19 other cell types or tissues"/>
</dbReference>
<dbReference type="GO" id="GO:0031902">
    <property type="term" value="C:late endosome membrane"/>
    <property type="evidence" value="ECO:0007669"/>
    <property type="project" value="UniProtKB-SubCell"/>
</dbReference>
<dbReference type="GO" id="GO:0005765">
    <property type="term" value="C:lysosomal membrane"/>
    <property type="evidence" value="ECO:0000250"/>
    <property type="project" value="UniProtKB"/>
</dbReference>
<dbReference type="GO" id="GO:0071986">
    <property type="term" value="C:Ragulator complex"/>
    <property type="evidence" value="ECO:0000250"/>
    <property type="project" value="UniProtKB"/>
</dbReference>
<dbReference type="GO" id="GO:0071230">
    <property type="term" value="P:cellular response to amino acid stimulus"/>
    <property type="evidence" value="ECO:0000250"/>
    <property type="project" value="UniProtKB"/>
</dbReference>
<dbReference type="GO" id="GO:0032008">
    <property type="term" value="P:positive regulation of TOR signaling"/>
    <property type="evidence" value="ECO:0000250"/>
    <property type="project" value="UniProtKB"/>
</dbReference>
<dbReference type="GO" id="GO:1904263">
    <property type="term" value="P:positive regulation of TORC1 signaling"/>
    <property type="evidence" value="ECO:0000250"/>
    <property type="project" value="UniProtKB"/>
</dbReference>
<dbReference type="GO" id="GO:0008104">
    <property type="term" value="P:protein localization"/>
    <property type="evidence" value="ECO:0000250"/>
    <property type="project" value="UniProtKB"/>
</dbReference>
<dbReference type="FunFam" id="3.30.450.30:FF:000003">
    <property type="entry name" value="ragulator complex protein LAMTOR3 homolog"/>
    <property type="match status" value="1"/>
</dbReference>
<dbReference type="Gene3D" id="3.30.450.30">
    <property type="entry name" value="Dynein light chain 2a, cytoplasmic"/>
    <property type="match status" value="1"/>
</dbReference>
<dbReference type="InterPro" id="IPR015019">
    <property type="entry name" value="LAMTOR3"/>
</dbReference>
<dbReference type="PANTHER" id="PTHR13378:SF1">
    <property type="entry name" value="RAGULATOR COMPLEX PROTEIN LAMTOR3"/>
    <property type="match status" value="1"/>
</dbReference>
<dbReference type="PANTHER" id="PTHR13378">
    <property type="entry name" value="REGULATOR COMPLEX PROTEIN LAMTOR3"/>
    <property type="match status" value="1"/>
</dbReference>
<dbReference type="Pfam" id="PF08923">
    <property type="entry name" value="MAPKK1_Int"/>
    <property type="match status" value="1"/>
</dbReference>
<dbReference type="SMART" id="SM01278">
    <property type="entry name" value="MAPKK1_Int"/>
    <property type="match status" value="1"/>
</dbReference>
<dbReference type="SUPFAM" id="SSF103196">
    <property type="entry name" value="Roadblock/LC7 domain"/>
    <property type="match status" value="1"/>
</dbReference>
<keyword id="KW-0967">Endosome</keyword>
<keyword id="KW-0472">Membrane</keyword>
<keyword id="KW-1185">Reference proteome</keyword>
<evidence type="ECO:0000250" key="1">
    <source>
        <dbReference type="UniProtKB" id="O88653"/>
    </source>
</evidence>
<evidence type="ECO:0000250" key="2">
    <source>
        <dbReference type="UniProtKB" id="Q9UHA4"/>
    </source>
</evidence>
<evidence type="ECO:0000305" key="3"/>